<comment type="function">
    <text evidence="1">One of the primary rRNA binding proteins, it binds directly to 16S rRNA central domain where it helps coordinate assembly of the platform of the 30S subunit.</text>
</comment>
<comment type="subunit">
    <text evidence="1">Part of the 30S ribosomal subunit. Contacts proteins S5 and S12.</text>
</comment>
<comment type="similarity">
    <text evidence="1">Belongs to the universal ribosomal protein uS8 family.</text>
</comment>
<keyword id="KW-0687">Ribonucleoprotein</keyword>
<keyword id="KW-0689">Ribosomal protein</keyword>
<keyword id="KW-0694">RNA-binding</keyword>
<keyword id="KW-0699">rRNA-binding</keyword>
<accession>B2G8W4</accession>
<organism>
    <name type="scientific">Limosilactobacillus reuteri subsp. reuteri (strain JCM 1112)</name>
    <name type="common">Lactobacillus reuteri</name>
    <dbReference type="NCBI Taxonomy" id="557433"/>
    <lineage>
        <taxon>Bacteria</taxon>
        <taxon>Bacillati</taxon>
        <taxon>Bacillota</taxon>
        <taxon>Bacilli</taxon>
        <taxon>Lactobacillales</taxon>
        <taxon>Lactobacillaceae</taxon>
        <taxon>Limosilactobacillus</taxon>
    </lineage>
</organism>
<sequence>MSMSDPIADFLTRIRNANMAQHESVEAPASKMKKDIAEILKNEGFIRDVEYVDDNKQGIIRVFLKYGNDGQRVISGLKRISKPGLRTYVKSDAVPKVLNGLGIAIISTSEGVVTDKVARAKKIGGEVIAYVW</sequence>
<protein>
    <recommendedName>
        <fullName evidence="1">Small ribosomal subunit protein uS8</fullName>
    </recommendedName>
    <alternativeName>
        <fullName evidence="2">30S ribosomal protein S8</fullName>
    </alternativeName>
</protein>
<dbReference type="EMBL" id="AP007281">
    <property type="protein sequence ID" value="BAG25896.1"/>
    <property type="molecule type" value="Genomic_DNA"/>
</dbReference>
<dbReference type="RefSeq" id="WP_003664546.1">
    <property type="nucleotide sequence ID" value="NC_010609.1"/>
</dbReference>
<dbReference type="SMR" id="B2G8W4"/>
<dbReference type="GeneID" id="77191465"/>
<dbReference type="KEGG" id="lrf:LAR_1380"/>
<dbReference type="HOGENOM" id="CLU_098428_0_2_9"/>
<dbReference type="GO" id="GO:1990904">
    <property type="term" value="C:ribonucleoprotein complex"/>
    <property type="evidence" value="ECO:0007669"/>
    <property type="project" value="UniProtKB-KW"/>
</dbReference>
<dbReference type="GO" id="GO:0005840">
    <property type="term" value="C:ribosome"/>
    <property type="evidence" value="ECO:0007669"/>
    <property type="project" value="UniProtKB-KW"/>
</dbReference>
<dbReference type="GO" id="GO:0019843">
    <property type="term" value="F:rRNA binding"/>
    <property type="evidence" value="ECO:0007669"/>
    <property type="project" value="UniProtKB-UniRule"/>
</dbReference>
<dbReference type="GO" id="GO:0003735">
    <property type="term" value="F:structural constituent of ribosome"/>
    <property type="evidence" value="ECO:0007669"/>
    <property type="project" value="InterPro"/>
</dbReference>
<dbReference type="GO" id="GO:0006412">
    <property type="term" value="P:translation"/>
    <property type="evidence" value="ECO:0007669"/>
    <property type="project" value="UniProtKB-UniRule"/>
</dbReference>
<dbReference type="FunFam" id="3.30.1370.30:FF:000002">
    <property type="entry name" value="30S ribosomal protein S8"/>
    <property type="match status" value="1"/>
</dbReference>
<dbReference type="FunFam" id="3.30.1490.10:FF:000001">
    <property type="entry name" value="30S ribosomal protein S8"/>
    <property type="match status" value="1"/>
</dbReference>
<dbReference type="Gene3D" id="3.30.1370.30">
    <property type="match status" value="1"/>
</dbReference>
<dbReference type="Gene3D" id="3.30.1490.10">
    <property type="match status" value="1"/>
</dbReference>
<dbReference type="HAMAP" id="MF_01302_B">
    <property type="entry name" value="Ribosomal_uS8_B"/>
    <property type="match status" value="1"/>
</dbReference>
<dbReference type="InterPro" id="IPR000630">
    <property type="entry name" value="Ribosomal_uS8"/>
</dbReference>
<dbReference type="InterPro" id="IPR047863">
    <property type="entry name" value="Ribosomal_uS8_CS"/>
</dbReference>
<dbReference type="InterPro" id="IPR035987">
    <property type="entry name" value="Ribosomal_uS8_sf"/>
</dbReference>
<dbReference type="NCBIfam" id="NF001109">
    <property type="entry name" value="PRK00136.1"/>
    <property type="match status" value="1"/>
</dbReference>
<dbReference type="PANTHER" id="PTHR11758">
    <property type="entry name" value="40S RIBOSOMAL PROTEIN S15A"/>
    <property type="match status" value="1"/>
</dbReference>
<dbReference type="Pfam" id="PF00410">
    <property type="entry name" value="Ribosomal_S8"/>
    <property type="match status" value="1"/>
</dbReference>
<dbReference type="SUPFAM" id="SSF56047">
    <property type="entry name" value="Ribosomal protein S8"/>
    <property type="match status" value="1"/>
</dbReference>
<dbReference type="PROSITE" id="PS00053">
    <property type="entry name" value="RIBOSOMAL_S8"/>
    <property type="match status" value="1"/>
</dbReference>
<reference key="1">
    <citation type="journal article" date="2008" name="DNA Res.">
        <title>Comparative genome analysis of Lactobacillus reuteri and Lactobacillus fermentum reveal a genomic island for reuterin and cobalamin production.</title>
        <authorList>
            <person name="Morita H."/>
            <person name="Toh H."/>
            <person name="Fukuda S."/>
            <person name="Horikawa H."/>
            <person name="Oshima K."/>
            <person name="Suzuki T."/>
            <person name="Murakami M."/>
            <person name="Hisamatsu S."/>
            <person name="Kato Y."/>
            <person name="Takizawa T."/>
            <person name="Fukuoka H."/>
            <person name="Yoshimura T."/>
            <person name="Itoh K."/>
            <person name="O'Sullivan D.J."/>
            <person name="McKay L.L."/>
            <person name="Ohno H."/>
            <person name="Kikuchi J."/>
            <person name="Masaoka T."/>
            <person name="Hattori M."/>
        </authorList>
    </citation>
    <scope>NUCLEOTIDE SEQUENCE [LARGE SCALE GENOMIC DNA]</scope>
    <source>
        <strain>JCM 1112</strain>
    </source>
</reference>
<gene>
    <name evidence="1" type="primary">rpsH</name>
    <name type="ordered locus">LAR_1380</name>
</gene>
<proteinExistence type="inferred from homology"/>
<evidence type="ECO:0000255" key="1">
    <source>
        <dbReference type="HAMAP-Rule" id="MF_01302"/>
    </source>
</evidence>
<evidence type="ECO:0000305" key="2"/>
<name>RS8_LIMRJ</name>
<feature type="chain" id="PRO_1000140573" description="Small ribosomal subunit protein uS8">
    <location>
        <begin position="1"/>
        <end position="132"/>
    </location>
</feature>